<reference key="1">
    <citation type="journal article" date="2007" name="Genome Biol.">
        <title>Characterization and modeling of the Haemophilus influenzae core and supragenomes based on the complete genomic sequences of Rd and 12 clinical nontypeable strains.</title>
        <authorList>
            <person name="Hogg J.S."/>
            <person name="Hu F.Z."/>
            <person name="Janto B."/>
            <person name="Boissy R."/>
            <person name="Hayes J."/>
            <person name="Keefe R."/>
            <person name="Post J.C."/>
            <person name="Ehrlich G.D."/>
        </authorList>
    </citation>
    <scope>NUCLEOTIDE SEQUENCE [LARGE SCALE GENOMIC DNA]</scope>
    <source>
        <strain>PittEE</strain>
    </source>
</reference>
<evidence type="ECO:0000255" key="1">
    <source>
        <dbReference type="HAMAP-Rule" id="MF_00191"/>
    </source>
</evidence>
<protein>
    <recommendedName>
        <fullName evidence="1">4-hydroxy-3-methylbut-2-enyl diphosphate reductase</fullName>
        <shortName evidence="1">HMBPP reductase</shortName>
        <ecNumber evidence="1">1.17.7.4</ecNumber>
    </recommendedName>
</protein>
<keyword id="KW-0004">4Fe-4S</keyword>
<keyword id="KW-0408">Iron</keyword>
<keyword id="KW-0411">Iron-sulfur</keyword>
<keyword id="KW-0414">Isoprene biosynthesis</keyword>
<keyword id="KW-0479">Metal-binding</keyword>
<keyword id="KW-0560">Oxidoreductase</keyword>
<dbReference type="EC" id="1.17.7.4" evidence="1"/>
<dbReference type="EMBL" id="CP000671">
    <property type="protein sequence ID" value="ABQ98720.1"/>
    <property type="molecule type" value="Genomic_DNA"/>
</dbReference>
<dbReference type="SMR" id="A5UD69"/>
<dbReference type="KEGG" id="hip:CGSHiEE_06935"/>
<dbReference type="HOGENOM" id="CLU_027486_1_0_6"/>
<dbReference type="UniPathway" id="UPA00056">
    <property type="reaction ID" value="UER00097"/>
</dbReference>
<dbReference type="UniPathway" id="UPA00059">
    <property type="reaction ID" value="UER00105"/>
</dbReference>
<dbReference type="GO" id="GO:0051539">
    <property type="term" value="F:4 iron, 4 sulfur cluster binding"/>
    <property type="evidence" value="ECO:0007669"/>
    <property type="project" value="UniProtKB-UniRule"/>
</dbReference>
<dbReference type="GO" id="GO:0051745">
    <property type="term" value="F:4-hydroxy-3-methylbut-2-enyl diphosphate reductase activity"/>
    <property type="evidence" value="ECO:0007669"/>
    <property type="project" value="UniProtKB-UniRule"/>
</dbReference>
<dbReference type="GO" id="GO:0046872">
    <property type="term" value="F:metal ion binding"/>
    <property type="evidence" value="ECO:0007669"/>
    <property type="project" value="UniProtKB-KW"/>
</dbReference>
<dbReference type="GO" id="GO:0050992">
    <property type="term" value="P:dimethylallyl diphosphate biosynthetic process"/>
    <property type="evidence" value="ECO:0007669"/>
    <property type="project" value="UniProtKB-UniRule"/>
</dbReference>
<dbReference type="GO" id="GO:0019288">
    <property type="term" value="P:isopentenyl diphosphate biosynthetic process, methylerythritol 4-phosphate pathway"/>
    <property type="evidence" value="ECO:0007669"/>
    <property type="project" value="UniProtKB-UniRule"/>
</dbReference>
<dbReference type="GO" id="GO:0016114">
    <property type="term" value="P:terpenoid biosynthetic process"/>
    <property type="evidence" value="ECO:0007669"/>
    <property type="project" value="UniProtKB-UniRule"/>
</dbReference>
<dbReference type="CDD" id="cd13944">
    <property type="entry name" value="lytB_ispH"/>
    <property type="match status" value="1"/>
</dbReference>
<dbReference type="FunFam" id="3.40.50.11270:FF:000001">
    <property type="entry name" value="4-hydroxy-3-methylbut-2-enyl diphosphate reductase"/>
    <property type="match status" value="1"/>
</dbReference>
<dbReference type="Gene3D" id="3.40.50.11270">
    <property type="match status" value="1"/>
</dbReference>
<dbReference type="Gene3D" id="3.40.1010.20">
    <property type="entry name" value="4-hydroxy-3-methylbut-2-enyl diphosphate reductase, catalytic domain"/>
    <property type="match status" value="2"/>
</dbReference>
<dbReference type="HAMAP" id="MF_00191">
    <property type="entry name" value="IspH"/>
    <property type="match status" value="1"/>
</dbReference>
<dbReference type="InterPro" id="IPR003451">
    <property type="entry name" value="LytB/IspH"/>
</dbReference>
<dbReference type="NCBIfam" id="TIGR00216">
    <property type="entry name" value="ispH_lytB"/>
    <property type="match status" value="1"/>
</dbReference>
<dbReference type="NCBIfam" id="NF002188">
    <property type="entry name" value="PRK01045.1-2"/>
    <property type="match status" value="1"/>
</dbReference>
<dbReference type="NCBIfam" id="NF002190">
    <property type="entry name" value="PRK01045.1-4"/>
    <property type="match status" value="1"/>
</dbReference>
<dbReference type="PANTHER" id="PTHR30426">
    <property type="entry name" value="4-HYDROXY-3-METHYLBUT-2-ENYL DIPHOSPHATE REDUCTASE"/>
    <property type="match status" value="1"/>
</dbReference>
<dbReference type="PANTHER" id="PTHR30426:SF0">
    <property type="entry name" value="4-HYDROXY-3-METHYLBUT-2-ENYL DIPHOSPHATE REDUCTASE"/>
    <property type="match status" value="1"/>
</dbReference>
<dbReference type="Pfam" id="PF02401">
    <property type="entry name" value="LYTB"/>
    <property type="match status" value="1"/>
</dbReference>
<name>ISPH_HAEIE</name>
<proteinExistence type="inferred from homology"/>
<accession>A5UD69</accession>
<gene>
    <name evidence="1" type="primary">ispH</name>
    <name type="ordered locus">CGSHiEE_06935</name>
</gene>
<sequence>MKIILANPRGFCAGVDRAISIVELALEIHGAPIYVRHEVVHNRFVVNGLRERGAIFVEELSEVPDGAIVIFSAHGVSQAVRQEAKDRNLKVFDATCPLVTKVHMQVARASRKGTKAILIGHKGHPEVEGTMGQYSNEDGGIFLIEKVEDIARLPMQENDNLTFMTQTTLSLDDTAETIAALKEKYPAIQGPHKNDICYATTNRQEAVRELAKLSDLVLVVGSKNSSNSNRLAELASRMGVKSQLLDDPADIQADWFNDVKTIGITAGASAPEELVQSIISRLKRFGANSIEELQGLEENMFFEVPKELRIKEVN</sequence>
<comment type="function">
    <text evidence="1">Catalyzes the conversion of 1-hydroxy-2-methyl-2-(E)-butenyl 4-diphosphate (HMBPP) into a mixture of isopentenyl diphosphate (IPP) and dimethylallyl diphosphate (DMAPP). Acts in the terminal step of the DOXP/MEP pathway for isoprenoid precursor biosynthesis.</text>
</comment>
<comment type="catalytic activity">
    <reaction evidence="1">
        <text>isopentenyl diphosphate + 2 oxidized [2Fe-2S]-[ferredoxin] + H2O = (2E)-4-hydroxy-3-methylbut-2-enyl diphosphate + 2 reduced [2Fe-2S]-[ferredoxin] + 2 H(+)</text>
        <dbReference type="Rhea" id="RHEA:24488"/>
        <dbReference type="Rhea" id="RHEA-COMP:10000"/>
        <dbReference type="Rhea" id="RHEA-COMP:10001"/>
        <dbReference type="ChEBI" id="CHEBI:15377"/>
        <dbReference type="ChEBI" id="CHEBI:15378"/>
        <dbReference type="ChEBI" id="CHEBI:33737"/>
        <dbReference type="ChEBI" id="CHEBI:33738"/>
        <dbReference type="ChEBI" id="CHEBI:128753"/>
        <dbReference type="ChEBI" id="CHEBI:128769"/>
        <dbReference type="EC" id="1.17.7.4"/>
    </reaction>
</comment>
<comment type="catalytic activity">
    <reaction evidence="1">
        <text>dimethylallyl diphosphate + 2 oxidized [2Fe-2S]-[ferredoxin] + H2O = (2E)-4-hydroxy-3-methylbut-2-enyl diphosphate + 2 reduced [2Fe-2S]-[ferredoxin] + 2 H(+)</text>
        <dbReference type="Rhea" id="RHEA:24825"/>
        <dbReference type="Rhea" id="RHEA-COMP:10000"/>
        <dbReference type="Rhea" id="RHEA-COMP:10001"/>
        <dbReference type="ChEBI" id="CHEBI:15377"/>
        <dbReference type="ChEBI" id="CHEBI:15378"/>
        <dbReference type="ChEBI" id="CHEBI:33737"/>
        <dbReference type="ChEBI" id="CHEBI:33738"/>
        <dbReference type="ChEBI" id="CHEBI:57623"/>
        <dbReference type="ChEBI" id="CHEBI:128753"/>
        <dbReference type="EC" id="1.17.7.4"/>
    </reaction>
</comment>
<comment type="cofactor">
    <cofactor evidence="1">
        <name>[4Fe-4S] cluster</name>
        <dbReference type="ChEBI" id="CHEBI:49883"/>
    </cofactor>
    <text evidence="1">Binds 1 [4Fe-4S] cluster per subunit.</text>
</comment>
<comment type="pathway">
    <text evidence="1">Isoprenoid biosynthesis; dimethylallyl diphosphate biosynthesis; dimethylallyl diphosphate from (2E)-4-hydroxy-3-methylbutenyl diphosphate: step 1/1.</text>
</comment>
<comment type="pathway">
    <text evidence="1">Isoprenoid biosynthesis; isopentenyl diphosphate biosynthesis via DXP pathway; isopentenyl diphosphate from 1-deoxy-D-xylulose 5-phosphate: step 6/6.</text>
</comment>
<comment type="similarity">
    <text evidence="1">Belongs to the IspH family.</text>
</comment>
<organism>
    <name type="scientific">Haemophilus influenzae (strain PittEE)</name>
    <dbReference type="NCBI Taxonomy" id="374930"/>
    <lineage>
        <taxon>Bacteria</taxon>
        <taxon>Pseudomonadati</taxon>
        <taxon>Pseudomonadota</taxon>
        <taxon>Gammaproteobacteria</taxon>
        <taxon>Pasteurellales</taxon>
        <taxon>Pasteurellaceae</taxon>
        <taxon>Haemophilus</taxon>
    </lineage>
</organism>
<feature type="chain" id="PRO_1000021129" description="4-hydroxy-3-methylbut-2-enyl diphosphate reductase">
    <location>
        <begin position="1"/>
        <end position="314"/>
    </location>
</feature>
<feature type="active site" description="Proton donor" evidence="1">
    <location>
        <position position="126"/>
    </location>
</feature>
<feature type="binding site" evidence="1">
    <location>
        <position position="12"/>
    </location>
    <ligand>
        <name>[4Fe-4S] cluster</name>
        <dbReference type="ChEBI" id="CHEBI:49883"/>
    </ligand>
</feature>
<feature type="binding site" evidence="1">
    <location>
        <position position="41"/>
    </location>
    <ligand>
        <name>(2E)-4-hydroxy-3-methylbut-2-enyl diphosphate</name>
        <dbReference type="ChEBI" id="CHEBI:128753"/>
    </ligand>
</feature>
<feature type="binding site" evidence="1">
    <location>
        <position position="41"/>
    </location>
    <ligand>
        <name>dimethylallyl diphosphate</name>
        <dbReference type="ChEBI" id="CHEBI:57623"/>
    </ligand>
</feature>
<feature type="binding site" evidence="1">
    <location>
        <position position="41"/>
    </location>
    <ligand>
        <name>isopentenyl diphosphate</name>
        <dbReference type="ChEBI" id="CHEBI:128769"/>
    </ligand>
</feature>
<feature type="binding site" evidence="1">
    <location>
        <position position="74"/>
    </location>
    <ligand>
        <name>(2E)-4-hydroxy-3-methylbut-2-enyl diphosphate</name>
        <dbReference type="ChEBI" id="CHEBI:128753"/>
    </ligand>
</feature>
<feature type="binding site" evidence="1">
    <location>
        <position position="74"/>
    </location>
    <ligand>
        <name>dimethylallyl diphosphate</name>
        <dbReference type="ChEBI" id="CHEBI:57623"/>
    </ligand>
</feature>
<feature type="binding site" evidence="1">
    <location>
        <position position="74"/>
    </location>
    <ligand>
        <name>isopentenyl diphosphate</name>
        <dbReference type="ChEBI" id="CHEBI:128769"/>
    </ligand>
</feature>
<feature type="binding site" evidence="1">
    <location>
        <position position="96"/>
    </location>
    <ligand>
        <name>[4Fe-4S] cluster</name>
        <dbReference type="ChEBI" id="CHEBI:49883"/>
    </ligand>
</feature>
<feature type="binding site" evidence="1">
    <location>
        <position position="124"/>
    </location>
    <ligand>
        <name>(2E)-4-hydroxy-3-methylbut-2-enyl diphosphate</name>
        <dbReference type="ChEBI" id="CHEBI:128753"/>
    </ligand>
</feature>
<feature type="binding site" evidence="1">
    <location>
        <position position="124"/>
    </location>
    <ligand>
        <name>dimethylallyl diphosphate</name>
        <dbReference type="ChEBI" id="CHEBI:57623"/>
    </ligand>
</feature>
<feature type="binding site" evidence="1">
    <location>
        <position position="124"/>
    </location>
    <ligand>
        <name>isopentenyl diphosphate</name>
        <dbReference type="ChEBI" id="CHEBI:128769"/>
    </ligand>
</feature>
<feature type="binding site" evidence="1">
    <location>
        <position position="167"/>
    </location>
    <ligand>
        <name>(2E)-4-hydroxy-3-methylbut-2-enyl diphosphate</name>
        <dbReference type="ChEBI" id="CHEBI:128753"/>
    </ligand>
</feature>
<feature type="binding site" evidence="1">
    <location>
        <position position="197"/>
    </location>
    <ligand>
        <name>[4Fe-4S] cluster</name>
        <dbReference type="ChEBI" id="CHEBI:49883"/>
    </ligand>
</feature>
<feature type="binding site" evidence="1">
    <location>
        <position position="225"/>
    </location>
    <ligand>
        <name>(2E)-4-hydroxy-3-methylbut-2-enyl diphosphate</name>
        <dbReference type="ChEBI" id="CHEBI:128753"/>
    </ligand>
</feature>
<feature type="binding site" evidence="1">
    <location>
        <position position="225"/>
    </location>
    <ligand>
        <name>dimethylallyl diphosphate</name>
        <dbReference type="ChEBI" id="CHEBI:57623"/>
    </ligand>
</feature>
<feature type="binding site" evidence="1">
    <location>
        <position position="225"/>
    </location>
    <ligand>
        <name>isopentenyl diphosphate</name>
        <dbReference type="ChEBI" id="CHEBI:128769"/>
    </ligand>
</feature>
<feature type="binding site" evidence="1">
    <location>
        <position position="226"/>
    </location>
    <ligand>
        <name>(2E)-4-hydroxy-3-methylbut-2-enyl diphosphate</name>
        <dbReference type="ChEBI" id="CHEBI:128753"/>
    </ligand>
</feature>
<feature type="binding site" evidence="1">
    <location>
        <position position="226"/>
    </location>
    <ligand>
        <name>dimethylallyl diphosphate</name>
        <dbReference type="ChEBI" id="CHEBI:57623"/>
    </ligand>
</feature>
<feature type="binding site" evidence="1">
    <location>
        <position position="226"/>
    </location>
    <ligand>
        <name>isopentenyl diphosphate</name>
        <dbReference type="ChEBI" id="CHEBI:128769"/>
    </ligand>
</feature>
<feature type="binding site" evidence="1">
    <location>
        <position position="227"/>
    </location>
    <ligand>
        <name>(2E)-4-hydroxy-3-methylbut-2-enyl diphosphate</name>
        <dbReference type="ChEBI" id="CHEBI:128753"/>
    </ligand>
</feature>
<feature type="binding site" evidence="1">
    <location>
        <position position="227"/>
    </location>
    <ligand>
        <name>dimethylallyl diphosphate</name>
        <dbReference type="ChEBI" id="CHEBI:57623"/>
    </ligand>
</feature>
<feature type="binding site" evidence="1">
    <location>
        <position position="227"/>
    </location>
    <ligand>
        <name>isopentenyl diphosphate</name>
        <dbReference type="ChEBI" id="CHEBI:128769"/>
    </ligand>
</feature>
<feature type="binding site" evidence="1">
    <location>
        <position position="269"/>
    </location>
    <ligand>
        <name>(2E)-4-hydroxy-3-methylbut-2-enyl diphosphate</name>
        <dbReference type="ChEBI" id="CHEBI:128753"/>
    </ligand>
</feature>
<feature type="binding site" evidence="1">
    <location>
        <position position="269"/>
    </location>
    <ligand>
        <name>dimethylallyl diphosphate</name>
        <dbReference type="ChEBI" id="CHEBI:57623"/>
    </ligand>
</feature>
<feature type="binding site" evidence="1">
    <location>
        <position position="269"/>
    </location>
    <ligand>
        <name>isopentenyl diphosphate</name>
        <dbReference type="ChEBI" id="CHEBI:128769"/>
    </ligand>
</feature>